<dbReference type="EMBL" id="AJ278435">
    <property type="protein sequence ID" value="CAC17143.1"/>
    <property type="molecule type" value="Genomic_DNA"/>
</dbReference>
<dbReference type="EMBL" id="AY316153">
    <property type="protein sequence ID" value="AAP79888.1"/>
    <property type="molecule type" value="mRNA"/>
</dbReference>
<dbReference type="EMBL" id="AK039534">
    <property type="protein sequence ID" value="BAC30376.1"/>
    <property type="molecule type" value="mRNA"/>
</dbReference>
<dbReference type="EMBL" id="AK053498">
    <property type="protein sequence ID" value="BAC35405.1"/>
    <property type="molecule type" value="mRNA"/>
</dbReference>
<dbReference type="EMBL" id="BC053524">
    <property type="protein sequence ID" value="AAH53524.1"/>
    <property type="molecule type" value="mRNA"/>
</dbReference>
<dbReference type="EMBL" id="BC064825">
    <property type="protein sequence ID" value="AAH64825.1"/>
    <property type="molecule type" value="mRNA"/>
</dbReference>
<dbReference type="CCDS" id="CCDS40085.1"/>
<dbReference type="RefSeq" id="NP_852658.2">
    <property type="nucleotide sequence ID" value="NM_181517.5"/>
</dbReference>
<dbReference type="SMR" id="Q9EPL8"/>
<dbReference type="BioGRID" id="231437">
    <property type="interactions" value="20"/>
</dbReference>
<dbReference type="FunCoup" id="Q9EPL8">
    <property type="interactions" value="4942"/>
</dbReference>
<dbReference type="IntAct" id="Q9EPL8">
    <property type="interactions" value="7"/>
</dbReference>
<dbReference type="MINT" id="Q9EPL8"/>
<dbReference type="STRING" id="10090.ENSMUSP00000081782"/>
<dbReference type="ChEMBL" id="CHEMBL2176785"/>
<dbReference type="GlyGen" id="Q9EPL8">
    <property type="glycosylation" value="1 site, 1 O-linked glycan (1 site)"/>
</dbReference>
<dbReference type="iPTMnet" id="Q9EPL8"/>
<dbReference type="PhosphoSitePlus" id="Q9EPL8"/>
<dbReference type="SwissPalm" id="Q9EPL8"/>
<dbReference type="jPOST" id="Q9EPL8"/>
<dbReference type="PaxDb" id="10090-ENSMUSP00000081782"/>
<dbReference type="PeptideAtlas" id="Q9EPL8"/>
<dbReference type="ProteomicsDB" id="301660"/>
<dbReference type="Pumba" id="Q9EPL8"/>
<dbReference type="Antibodypedia" id="11566">
    <property type="antibodies" value="209 antibodies from 31 providers"/>
</dbReference>
<dbReference type="DNASU" id="233726"/>
<dbReference type="Ensembl" id="ENSMUST00000084731.5">
    <property type="protein sequence ID" value="ENSMUSP00000081782.4"/>
    <property type="gene ID" value="ENSMUSG00000066232.5"/>
</dbReference>
<dbReference type="GeneID" id="233726"/>
<dbReference type="KEGG" id="mmu:233726"/>
<dbReference type="UCSC" id="uc009jeu.1">
    <property type="organism name" value="mouse"/>
</dbReference>
<dbReference type="AGR" id="MGI:2152414"/>
<dbReference type="CTD" id="10527"/>
<dbReference type="MGI" id="MGI:2152414">
    <property type="gene designation" value="Ipo7"/>
</dbReference>
<dbReference type="VEuPathDB" id="HostDB:ENSMUSG00000066232"/>
<dbReference type="eggNOG" id="KOG1991">
    <property type="taxonomic scope" value="Eukaryota"/>
</dbReference>
<dbReference type="GeneTree" id="ENSGT00940000154666"/>
<dbReference type="HOGENOM" id="CLU_004196_1_1_1"/>
<dbReference type="InParanoid" id="Q9EPL8"/>
<dbReference type="OMA" id="WVAKTSW"/>
<dbReference type="OrthoDB" id="760868at2759"/>
<dbReference type="PhylomeDB" id="Q9EPL8"/>
<dbReference type="TreeFam" id="TF300634"/>
<dbReference type="BioGRID-ORCS" id="233726">
    <property type="hits" value="34 hits in 116 CRISPR screens"/>
</dbReference>
<dbReference type="ChiTaRS" id="Ipo7">
    <property type="organism name" value="mouse"/>
</dbReference>
<dbReference type="PRO" id="PR:Q9EPL8"/>
<dbReference type="Proteomes" id="UP000000589">
    <property type="component" value="Chromosome 7"/>
</dbReference>
<dbReference type="RNAct" id="Q9EPL8">
    <property type="molecule type" value="protein"/>
</dbReference>
<dbReference type="Bgee" id="ENSMUSG00000066232">
    <property type="expression patterns" value="Expressed in parotid gland and 264 other cell types or tissues"/>
</dbReference>
<dbReference type="ExpressionAtlas" id="Q9EPL8">
    <property type="expression patterns" value="baseline and differential"/>
</dbReference>
<dbReference type="GO" id="GO:0005737">
    <property type="term" value="C:cytoplasm"/>
    <property type="evidence" value="ECO:0000314"/>
    <property type="project" value="UniProtKB"/>
</dbReference>
<dbReference type="GO" id="GO:0005829">
    <property type="term" value="C:cytosol"/>
    <property type="evidence" value="ECO:0007669"/>
    <property type="project" value="Ensembl"/>
</dbReference>
<dbReference type="GO" id="GO:0005654">
    <property type="term" value="C:nucleoplasm"/>
    <property type="evidence" value="ECO:0007669"/>
    <property type="project" value="Ensembl"/>
</dbReference>
<dbReference type="GO" id="GO:0005634">
    <property type="term" value="C:nucleus"/>
    <property type="evidence" value="ECO:0000314"/>
    <property type="project" value="UniProtKB"/>
</dbReference>
<dbReference type="GO" id="GO:0042393">
    <property type="term" value="F:histone binding"/>
    <property type="evidence" value="ECO:0000314"/>
    <property type="project" value="MGI"/>
</dbReference>
<dbReference type="GO" id="GO:0046332">
    <property type="term" value="F:SMAD binding"/>
    <property type="evidence" value="ECO:0007669"/>
    <property type="project" value="Ensembl"/>
</dbReference>
<dbReference type="GO" id="GO:0031267">
    <property type="term" value="F:small GTPase binding"/>
    <property type="evidence" value="ECO:0007669"/>
    <property type="project" value="InterPro"/>
</dbReference>
<dbReference type="GO" id="GO:0045087">
    <property type="term" value="P:innate immune response"/>
    <property type="evidence" value="ECO:0000315"/>
    <property type="project" value="MGI"/>
</dbReference>
<dbReference type="GO" id="GO:0045668">
    <property type="term" value="P:negative regulation of osteoblast differentiation"/>
    <property type="evidence" value="ECO:0000315"/>
    <property type="project" value="UniProtKB"/>
</dbReference>
<dbReference type="GO" id="GO:1901331">
    <property type="term" value="P:positive regulation of odontoblast differentiation"/>
    <property type="evidence" value="ECO:0000315"/>
    <property type="project" value="UniProtKB"/>
</dbReference>
<dbReference type="GO" id="GO:1900182">
    <property type="term" value="P:positive regulation of protein localization to nucleus"/>
    <property type="evidence" value="ECO:0000314"/>
    <property type="project" value="UniProtKB"/>
</dbReference>
<dbReference type="GO" id="GO:0006606">
    <property type="term" value="P:protein import into nucleus"/>
    <property type="evidence" value="ECO:0000314"/>
    <property type="project" value="MGI"/>
</dbReference>
<dbReference type="FunFam" id="1.25.10.10:FF:000053">
    <property type="entry name" value="Importin 7"/>
    <property type="match status" value="1"/>
</dbReference>
<dbReference type="Gene3D" id="1.25.10.10">
    <property type="entry name" value="Leucine-rich Repeat Variant"/>
    <property type="match status" value="1"/>
</dbReference>
<dbReference type="InterPro" id="IPR011989">
    <property type="entry name" value="ARM-like"/>
</dbReference>
<dbReference type="InterPro" id="IPR016024">
    <property type="entry name" value="ARM-type_fold"/>
</dbReference>
<dbReference type="InterPro" id="IPR001494">
    <property type="entry name" value="Importin-beta_N"/>
</dbReference>
<dbReference type="InterPro" id="IPR013713">
    <property type="entry name" value="XPO2_central"/>
</dbReference>
<dbReference type="PANTHER" id="PTHR10997:SF27">
    <property type="entry name" value="IMPORTIN-7"/>
    <property type="match status" value="1"/>
</dbReference>
<dbReference type="PANTHER" id="PTHR10997">
    <property type="entry name" value="IMPORTIN-7, 8, 11"/>
    <property type="match status" value="1"/>
</dbReference>
<dbReference type="Pfam" id="PF08506">
    <property type="entry name" value="Cse1"/>
    <property type="match status" value="1"/>
</dbReference>
<dbReference type="Pfam" id="PF03810">
    <property type="entry name" value="IBN_N"/>
    <property type="match status" value="1"/>
</dbReference>
<dbReference type="SMART" id="SM00913">
    <property type="entry name" value="IBN_N"/>
    <property type="match status" value="1"/>
</dbReference>
<dbReference type="SUPFAM" id="SSF48371">
    <property type="entry name" value="ARM repeat"/>
    <property type="match status" value="1"/>
</dbReference>
<dbReference type="PROSITE" id="PS50166">
    <property type="entry name" value="IMPORTIN_B_NT"/>
    <property type="match status" value="1"/>
</dbReference>
<feature type="chain" id="PRO_0000120751" description="Importin-7">
    <location>
        <begin position="1"/>
        <end position="1038"/>
    </location>
</feature>
<feature type="domain" description="Importin N-terminal" evidence="2">
    <location>
        <begin position="22"/>
        <end position="101"/>
    </location>
</feature>
<feature type="region of interest" description="Disordered" evidence="3">
    <location>
        <begin position="881"/>
        <end position="910"/>
    </location>
</feature>
<feature type="compositionally biased region" description="Acidic residues" evidence="3">
    <location>
        <begin position="884"/>
        <end position="910"/>
    </location>
</feature>
<feature type="modified residue" description="N-acetylmethionine" evidence="1">
    <location>
        <position position="1"/>
    </location>
</feature>
<feature type="modified residue" description="Phosphoserine" evidence="1">
    <location>
        <position position="886"/>
    </location>
</feature>
<feature type="modified residue" description="Phosphothreonine" evidence="1">
    <location>
        <position position="898"/>
    </location>
</feature>
<feature type="modified residue" description="Phosphoserine" evidence="1">
    <location>
        <position position="903"/>
    </location>
</feature>
<feature type="modified residue" description="Phosphoserine" evidence="9">
    <location>
        <position position="1020"/>
    </location>
</feature>
<feature type="sequence conflict" description="In Ref. 3; BAC35405." evidence="8" ref="3">
    <original>E</original>
    <variation>G</variation>
    <location>
        <position position="160"/>
    </location>
</feature>
<feature type="sequence conflict" description="In Ref. 1; CAC17143." evidence="8" ref="1">
    <original>V</original>
    <variation>VV</variation>
    <location>
        <position position="407"/>
    </location>
</feature>
<sequence length="1038" mass="119486">MDPNTIIEALRGTMDPALREAAERQLNEAHKSLNFVSTLLQITMSEQLDLPVRQAGVIYLKNMITQYWPDREATPGDIAPYTIPEEDRHCIRENIVEAIIHSPELIRVQLTTCIHHIIKHDYPSRWTAIVDKIGFYLQSDNSACWLGILLCLYQLVKNYEYKKPEERSPLVAAMQHFLPVLKDRFIQLLSDQSDQSVLIQKQIFKIFYALVQYTLPLELINQQNLTEWVEILKTVVNRDVPNETLQVEEDDRPELPWWKCKKWALHILARLFERYGSPGNVSKEYNEFAEVFLKAFAVGVQQVLLKVLYQYKEKQYMAPRVLQQTLNYINQGVSHALTWKNLKPHIQGIIQDVIFPLMCYTDADEELWQEDPYEYIRMKFDVFEDFISPTTAAQTLLFTACSKRKEVLQKTMGFCYQILTEPNADPRKKDGALHMIGSLAEILLKKKIYKDQMEYMLQNHVFPLFSSELGYMRARACWVLHYFCEVKFKSDQNLQTALELTRRCLIDDREMPVKVEAAIALQVLISNQEKAKEYITPFIRPVMQALLHIIRETENDDLTNVIQKMICEYSEEVTPIAVEMTQHLAMTFNQVIQTGPDEEGSDDKAVTAMGILNTIDTLLSVVEDHKEITQQLEGICLQVIGTVLQQHVLEFYEEIFSLAHSLTCQQVSPQMWQLLPLVFEVFQQDGFDYFTDMMPLLHNYVTVDTDTLLSDTKYLEMIYSMCKKVLTGVAGEDAECHAAKLLEVIILQCKGRGIDQCIPLFVEAALERLTREVKTSELRTMCLQVAIAALYYNPHLLLNTLENLRFPNNVEPVTNHFITQWLNDVDCFLGLHDRKMCVLGLCALIDMEQIPQVLNQVSGQILPAFILLFNGLKRAYACHAEHENDSDDDEDAEDDDETEELGSDEDDIDEDGQEYLEILAKQAGEDGDDEDWEEDDAEETALEGYSTIIDDEDNPVDEYQIFKAIFQTIQNRNPVWYQALTHGLNEEQRKQLQDIATLADQRRAAHESKMIEKHGGYKFSAPVVPSSFNFGGPAPGMN</sequence>
<accession>Q9EPL8</accession>
<accession>Q7TN09</accession>
<accession>Q7TQ63</accession>
<accession>Q8BKD8</accession>
<accession>Q8BYI0</accession>
<proteinExistence type="evidence at protein level"/>
<organism>
    <name type="scientific">Mus musculus</name>
    <name type="common">Mouse</name>
    <dbReference type="NCBI Taxonomy" id="10090"/>
    <lineage>
        <taxon>Eukaryota</taxon>
        <taxon>Metazoa</taxon>
        <taxon>Chordata</taxon>
        <taxon>Craniata</taxon>
        <taxon>Vertebrata</taxon>
        <taxon>Euteleostomi</taxon>
        <taxon>Mammalia</taxon>
        <taxon>Eutheria</taxon>
        <taxon>Euarchontoglires</taxon>
        <taxon>Glires</taxon>
        <taxon>Rodentia</taxon>
        <taxon>Myomorpha</taxon>
        <taxon>Muroidea</taxon>
        <taxon>Muridae</taxon>
        <taxon>Murinae</taxon>
        <taxon>Mus</taxon>
        <taxon>Mus</taxon>
    </lineage>
</organism>
<evidence type="ECO:0000250" key="1">
    <source>
        <dbReference type="UniProtKB" id="O95373"/>
    </source>
</evidence>
<evidence type="ECO:0000255" key="2">
    <source>
        <dbReference type="PROSITE-ProRule" id="PRU00115"/>
    </source>
</evidence>
<evidence type="ECO:0000256" key="3">
    <source>
        <dbReference type="SAM" id="MobiDB-lite"/>
    </source>
</evidence>
<evidence type="ECO:0000269" key="4">
    <source>
    </source>
</evidence>
<evidence type="ECO:0000269" key="5">
    <source>
    </source>
</evidence>
<evidence type="ECO:0000269" key="6">
    <source>
    </source>
</evidence>
<evidence type="ECO:0000269" key="7">
    <source>
    </source>
</evidence>
<evidence type="ECO:0000305" key="8"/>
<evidence type="ECO:0007744" key="9">
    <source>
    </source>
</evidence>
<reference key="1">
    <citation type="journal article" date="2001" name="Cytogenet. Cell Genet.">
        <title>Comparative architectural aspects of regions of conserved synteny on human chromosome 11p15.3 and mouse chromosome 7 (including genes WEE1 and LMO1).</title>
        <authorList>
            <person name="Cichutek A."/>
            <person name="Brueckmann T."/>
            <person name="Seipel B."/>
            <person name="Hauser H."/>
            <person name="Schlaubitz S."/>
            <person name="Prawitt D."/>
            <person name="Hankeln T."/>
            <person name="Schmidt E.R."/>
            <person name="Winterpacht A."/>
            <person name="Zabel B.U."/>
        </authorList>
    </citation>
    <scope>NUCLEOTIDE SEQUENCE [GENOMIC DNA]</scope>
</reference>
<reference key="2">
    <citation type="submission" date="2003-06" db="EMBL/GenBank/DDBJ databases">
        <title>Isolation of cDNA for mouse RAN binding protein 7/importin 7.</title>
        <authorList>
            <person name="Pelka P."/>
            <person name="Joch M."/>
            <person name="Scime A."/>
            <person name="Whyte P."/>
        </authorList>
    </citation>
    <scope>NUCLEOTIDE SEQUENCE [MRNA]</scope>
    <source>
        <strain>BALB/cJ</strain>
    </source>
</reference>
<reference key="3">
    <citation type="journal article" date="2005" name="Science">
        <title>The transcriptional landscape of the mammalian genome.</title>
        <authorList>
            <person name="Carninci P."/>
            <person name="Kasukawa T."/>
            <person name="Katayama S."/>
            <person name="Gough J."/>
            <person name="Frith M.C."/>
            <person name="Maeda N."/>
            <person name="Oyama R."/>
            <person name="Ravasi T."/>
            <person name="Lenhard B."/>
            <person name="Wells C."/>
            <person name="Kodzius R."/>
            <person name="Shimokawa K."/>
            <person name="Bajic V.B."/>
            <person name="Brenner S.E."/>
            <person name="Batalov S."/>
            <person name="Forrest A.R."/>
            <person name="Zavolan M."/>
            <person name="Davis M.J."/>
            <person name="Wilming L.G."/>
            <person name="Aidinis V."/>
            <person name="Allen J.E."/>
            <person name="Ambesi-Impiombato A."/>
            <person name="Apweiler R."/>
            <person name="Aturaliya R.N."/>
            <person name="Bailey T.L."/>
            <person name="Bansal M."/>
            <person name="Baxter L."/>
            <person name="Beisel K.W."/>
            <person name="Bersano T."/>
            <person name="Bono H."/>
            <person name="Chalk A.M."/>
            <person name="Chiu K.P."/>
            <person name="Choudhary V."/>
            <person name="Christoffels A."/>
            <person name="Clutterbuck D.R."/>
            <person name="Crowe M.L."/>
            <person name="Dalla E."/>
            <person name="Dalrymple B.P."/>
            <person name="de Bono B."/>
            <person name="Della Gatta G."/>
            <person name="di Bernardo D."/>
            <person name="Down T."/>
            <person name="Engstrom P."/>
            <person name="Fagiolini M."/>
            <person name="Faulkner G."/>
            <person name="Fletcher C.F."/>
            <person name="Fukushima T."/>
            <person name="Furuno M."/>
            <person name="Futaki S."/>
            <person name="Gariboldi M."/>
            <person name="Georgii-Hemming P."/>
            <person name="Gingeras T.R."/>
            <person name="Gojobori T."/>
            <person name="Green R.E."/>
            <person name="Gustincich S."/>
            <person name="Harbers M."/>
            <person name="Hayashi Y."/>
            <person name="Hensch T.K."/>
            <person name="Hirokawa N."/>
            <person name="Hill D."/>
            <person name="Huminiecki L."/>
            <person name="Iacono M."/>
            <person name="Ikeo K."/>
            <person name="Iwama A."/>
            <person name="Ishikawa T."/>
            <person name="Jakt M."/>
            <person name="Kanapin A."/>
            <person name="Katoh M."/>
            <person name="Kawasawa Y."/>
            <person name="Kelso J."/>
            <person name="Kitamura H."/>
            <person name="Kitano H."/>
            <person name="Kollias G."/>
            <person name="Krishnan S.P."/>
            <person name="Kruger A."/>
            <person name="Kummerfeld S.K."/>
            <person name="Kurochkin I.V."/>
            <person name="Lareau L.F."/>
            <person name="Lazarevic D."/>
            <person name="Lipovich L."/>
            <person name="Liu J."/>
            <person name="Liuni S."/>
            <person name="McWilliam S."/>
            <person name="Madan Babu M."/>
            <person name="Madera M."/>
            <person name="Marchionni L."/>
            <person name="Matsuda H."/>
            <person name="Matsuzawa S."/>
            <person name="Miki H."/>
            <person name="Mignone F."/>
            <person name="Miyake S."/>
            <person name="Morris K."/>
            <person name="Mottagui-Tabar S."/>
            <person name="Mulder N."/>
            <person name="Nakano N."/>
            <person name="Nakauchi H."/>
            <person name="Ng P."/>
            <person name="Nilsson R."/>
            <person name="Nishiguchi S."/>
            <person name="Nishikawa S."/>
            <person name="Nori F."/>
            <person name="Ohara O."/>
            <person name="Okazaki Y."/>
            <person name="Orlando V."/>
            <person name="Pang K.C."/>
            <person name="Pavan W.J."/>
            <person name="Pavesi G."/>
            <person name="Pesole G."/>
            <person name="Petrovsky N."/>
            <person name="Piazza S."/>
            <person name="Reed J."/>
            <person name="Reid J.F."/>
            <person name="Ring B.Z."/>
            <person name="Ringwald M."/>
            <person name="Rost B."/>
            <person name="Ruan Y."/>
            <person name="Salzberg S.L."/>
            <person name="Sandelin A."/>
            <person name="Schneider C."/>
            <person name="Schoenbach C."/>
            <person name="Sekiguchi K."/>
            <person name="Semple C.A."/>
            <person name="Seno S."/>
            <person name="Sessa L."/>
            <person name="Sheng Y."/>
            <person name="Shibata Y."/>
            <person name="Shimada H."/>
            <person name="Shimada K."/>
            <person name="Silva D."/>
            <person name="Sinclair B."/>
            <person name="Sperling S."/>
            <person name="Stupka E."/>
            <person name="Sugiura K."/>
            <person name="Sultana R."/>
            <person name="Takenaka Y."/>
            <person name="Taki K."/>
            <person name="Tammoja K."/>
            <person name="Tan S.L."/>
            <person name="Tang S."/>
            <person name="Taylor M.S."/>
            <person name="Tegner J."/>
            <person name="Teichmann S.A."/>
            <person name="Ueda H.R."/>
            <person name="van Nimwegen E."/>
            <person name="Verardo R."/>
            <person name="Wei C.L."/>
            <person name="Yagi K."/>
            <person name="Yamanishi H."/>
            <person name="Zabarovsky E."/>
            <person name="Zhu S."/>
            <person name="Zimmer A."/>
            <person name="Hide W."/>
            <person name="Bult C."/>
            <person name="Grimmond S.M."/>
            <person name="Teasdale R.D."/>
            <person name="Liu E.T."/>
            <person name="Brusic V."/>
            <person name="Quackenbush J."/>
            <person name="Wahlestedt C."/>
            <person name="Mattick J.S."/>
            <person name="Hume D.A."/>
            <person name="Kai C."/>
            <person name="Sasaki D."/>
            <person name="Tomaru Y."/>
            <person name="Fukuda S."/>
            <person name="Kanamori-Katayama M."/>
            <person name="Suzuki M."/>
            <person name="Aoki J."/>
            <person name="Arakawa T."/>
            <person name="Iida J."/>
            <person name="Imamura K."/>
            <person name="Itoh M."/>
            <person name="Kato T."/>
            <person name="Kawaji H."/>
            <person name="Kawagashira N."/>
            <person name="Kawashima T."/>
            <person name="Kojima M."/>
            <person name="Kondo S."/>
            <person name="Konno H."/>
            <person name="Nakano K."/>
            <person name="Ninomiya N."/>
            <person name="Nishio T."/>
            <person name="Okada M."/>
            <person name="Plessy C."/>
            <person name="Shibata K."/>
            <person name="Shiraki T."/>
            <person name="Suzuki S."/>
            <person name="Tagami M."/>
            <person name="Waki K."/>
            <person name="Watahiki A."/>
            <person name="Okamura-Oho Y."/>
            <person name="Suzuki H."/>
            <person name="Kawai J."/>
            <person name="Hayashizaki Y."/>
        </authorList>
    </citation>
    <scope>NUCLEOTIDE SEQUENCE [LARGE SCALE MRNA] OF 1-895</scope>
    <source>
        <strain>C57BL/6J</strain>
        <tissue>Eye</tissue>
        <tissue>Spinal cord</tissue>
    </source>
</reference>
<reference key="4">
    <citation type="journal article" date="2004" name="Genome Res.">
        <title>The status, quality, and expansion of the NIH full-length cDNA project: the Mammalian Gene Collection (MGC).</title>
        <authorList>
            <consortium name="The MGC Project Team"/>
        </authorList>
    </citation>
    <scope>NUCLEOTIDE SEQUENCE [LARGE SCALE MRNA] OF 107-1038</scope>
    <source>
        <strain>FVB/N</strain>
        <tissue>Mammary tumor</tissue>
    </source>
</reference>
<reference key="5">
    <citation type="journal article" date="2001" name="EMBO Rep.">
        <title>Multiple pathways contribute to nuclear import of core histones.</title>
        <authorList>
            <person name="Muehlhaeusser P."/>
            <person name="Mueller E.-C."/>
            <person name="Otto A."/>
            <person name="Kutay U."/>
        </authorList>
    </citation>
    <scope>FUNCTION</scope>
    <scope>INTERACTION WITH HISTONES H2B; H2A; H3 AND H4</scope>
</reference>
<reference key="6">
    <citation type="journal article" date="2010" name="Cell">
        <title>A tissue-specific atlas of mouse protein phosphorylation and expression.</title>
        <authorList>
            <person name="Huttlin E.L."/>
            <person name="Jedrychowski M.P."/>
            <person name="Elias J.E."/>
            <person name="Goswami T."/>
            <person name="Rad R."/>
            <person name="Beausoleil S.A."/>
            <person name="Villen J."/>
            <person name="Haas W."/>
            <person name="Sowa M.E."/>
            <person name="Gygi S.P."/>
        </authorList>
    </citation>
    <scope>PHOSPHORYLATION [LARGE SCALE ANALYSIS] AT SER-1020</scope>
    <scope>IDENTIFICATION BY MASS SPECTROMETRY [LARGE SCALE ANALYSIS]</scope>
    <source>
        <tissue>Brain</tissue>
        <tissue>Brown adipose tissue</tissue>
        <tissue>Heart</tissue>
        <tissue>Kidney</tissue>
        <tissue>Liver</tissue>
        <tissue>Lung</tissue>
        <tissue>Pancreas</tissue>
        <tissue>Spleen</tissue>
        <tissue>Testis</tissue>
    </source>
</reference>
<reference key="7">
    <citation type="journal article" date="2021" name="Biochem. Biophys. Res. Commun.">
        <title>Effects of transforming growth factor-beta1 on odontoblastic differentiation in dental papilla cells is determined by IPO7 expression level.</title>
        <authorList>
            <person name="Zhang Y."/>
            <person name="Zhang H."/>
            <person name="Yuan G."/>
            <person name="Yang G."/>
        </authorList>
    </citation>
    <scope>FUNCTION</scope>
    <scope>INTERACTION WITH SMAD2</scope>
</reference>
<reference key="8">
    <citation type="journal article" date="2022" name="Cells Dev.">
        <title>The regulation of Msx1 by BMP4/pSmad1/5 signaling is mediated by importin7 in dental mesenchymal cells.</title>
        <authorList>
            <person name="She Y."/>
            <person name="Zhang Y."/>
            <person name="Xiao Z."/>
            <person name="Yuan G."/>
            <person name="Yang G."/>
        </authorList>
    </citation>
    <scope>FUNCTION</scope>
    <scope>SUBCELLULAR LOCATION</scope>
    <scope>DEVELOPMENTAL STAGE</scope>
</reference>
<reference key="9">
    <citation type="journal article" date="2022" name="Stem Cells">
        <title>IPO7 Promotes Odontoblastic Differentiation and Inhibits Osteoblastic Differentiation Through Regulation of RUNX2 Expression and Translocation.</title>
        <authorList>
            <person name="Zhang Y."/>
            <person name="Zhang H."/>
            <person name="Xiao Z."/>
            <person name="Yuan G."/>
            <person name="Yang G."/>
        </authorList>
    </citation>
    <scope>FUNCTION</scope>
    <scope>INTERACTION WITH DLX3; KLF4; RUNX2 AND HDAC6</scope>
    <scope>SUBCELLULAR LOCATION</scope>
    <scope>DEVELOPMENTAL STAGE</scope>
    <scope>INDUCTION BY ODONTOBLASTIC DIFFERENTIATION</scope>
</reference>
<name>IPO7_MOUSE</name>
<comment type="function">
    <text evidence="1 4 5 6 7">Functions in nuclear protein import, either by acting as autonomous nuclear transport receptor or as an adapter-like protein in association with the importin-beta subunit KPNB1. Acting autonomously is thought to serve itself as receptor for nuclear localization signals (NLS) and to promote translocation of import substrates through the nuclear pore complex (NPC) by an energy requiring, Ran-dependent mechanism. At the nucleoplasmic side of the NPC, Ran binds to importin, the importin/substrate complex dissociates and importin is re-exported from the nucleus to the cytoplasm where GTP hydrolysis releases Ran. Mediates autonomously the nuclear import of ribosomal proteins RPL23A, RPS7 and RPL5 (By similarity). In association with KPNB1 mediates the nuclear import of H1 histone and the Ran-binding site of IPO7 is not required but synergizes with that of KPNB1 in importin/substrate complex dissociation (By similarity). Promotes odontoblast differentiation via promoting nuclear translocation of DLX3, KLF4, SMAD2, thereby facilitating the transcription of target genes that play a role in odontoblast differentiation (PubMed:33548622, PubMed:35922041). Facilitates BMP4-induced translocation of SMAD1 to the nucleus and recruitment to the MSX1 gene promoter, thereby promotes the expression of the odontogenic regulator MSX1 in dental mesenchymal cells (PubMed:34995814). Also promotes odontoblast differentiation by facilitating the nuclear translocation of HDAC6 and subsequent repression of RUNX2 expression (PubMed:35922041). Inhibits osteoblast differentiation by inhibiting nuclear translocation of RUNX2 and therefore inhibition of RUNX2 target gene transcription (PubMed:35922041). In vitro, mediates nuclear import of H2A, H2B, H3 and H4 histones (PubMed:11493596).</text>
</comment>
<comment type="subunit">
    <text evidence="1 4 5 7">Forms a heterodimer with KPNB1 (By similarity). Interacts with histone H1 (By similarity). Interacts with H2A, H2B, H3 and H4 histones (PubMed:11493596). Interacts with SNUPN and XPO1 (By similarity). Interacts with RPS7 and RPL5 (By similarity). Interacts with RPL23A (via BIB domain) (By similarity). Binds directly to nuclear pore complexes (By similarity). Interacts with SMAD4 and NUP93; translocates SMAD4 to the nucleus through the NPC upon BMP7 stimulation resulting in activation of SMAD4 signaling (By similarity). Interacts with phosphorylated SMAD2; the interaction facilitates translocation of SMAD2 to the nucleus (PubMed:33548622). Interacts with SRP19 (By similarity). Interacts with RUNX2; the interaction inhibits RUNX2 nuclear translocation in osteoblasts (PubMed:35922041). Interacts with HDAC6, DLX3 and KLF4; the interaction facilitates HDAC6, DLX3 and KLF4 nuclear translocation in dental papilla cells (PubMed:35922041).</text>
</comment>
<comment type="subcellular location">
    <subcellularLocation>
        <location evidence="6 7">Cytoplasm</location>
    </subcellularLocation>
    <subcellularLocation>
        <location evidence="6 7">Nucleus</location>
    </subcellularLocation>
    <text evidence="6">Localizes to the nucleus in the presence of BMP4.</text>
</comment>
<comment type="developmental stage">
    <text evidence="6 7">Abundantly expressed in dental epithelial cells, with lower expression in dental mesenchymal cells of the lower molars at 12.5 and 18.5 dpc (at protein level) (PubMed:35922041). Weakly expressed in pre-odontoblasts and papilla cells, moderately expressed in polarizing odontoblasts and abundantly expressed in secretory and mature odontoblasts at birth (at protein level) (PubMed:35922041). Expressed in dental mesenchymal cells at birth (at protein level) (PubMed:34995814). Strongly expressed in differentiated odontoblasts of molars at 1, 3 and 9 days of age (at protein level) (PubMed:35922041).</text>
</comment>
<comment type="induction">
    <text evidence="7">Induced by odontoblastic differentiation in dental papilla cells.</text>
</comment>
<comment type="similarity">
    <text evidence="8">Belongs to the importin beta family.</text>
</comment>
<keyword id="KW-0007">Acetylation</keyword>
<keyword id="KW-0963">Cytoplasm</keyword>
<keyword id="KW-0539">Nucleus</keyword>
<keyword id="KW-0597">Phosphoprotein</keyword>
<keyword id="KW-0653">Protein transport</keyword>
<keyword id="KW-1185">Reference proteome</keyword>
<keyword id="KW-0813">Transport</keyword>
<gene>
    <name type="primary">Ipo7</name>
    <name type="synonym">Ranbp7</name>
</gene>
<protein>
    <recommendedName>
        <fullName>Importin-7</fullName>
        <shortName>Imp7</shortName>
    </recommendedName>
    <alternativeName>
        <fullName>Ran-binding protein 7</fullName>
        <shortName>RanBP7</shortName>
    </alternativeName>
</protein>